<gene>
    <name type="primary">manF</name>
    <name type="ORF">AO090038000444</name>
</gene>
<dbReference type="EC" id="3.2.1.78"/>
<dbReference type="EMBL" id="BA000054">
    <property type="protein sequence ID" value="BAE64232.1"/>
    <property type="status" value="ALT_SEQ"/>
    <property type="molecule type" value="Genomic_DNA"/>
</dbReference>
<dbReference type="RefSeq" id="XP_001825365.2">
    <property type="nucleotide sequence ID" value="XM_001825313.2"/>
</dbReference>
<dbReference type="SMR" id="Q2U2I3"/>
<dbReference type="STRING" id="510516.Q2U2I3"/>
<dbReference type="CAZy" id="GH5">
    <property type="family name" value="Glycoside Hydrolase Family 5"/>
</dbReference>
<dbReference type="GlyCosmos" id="Q2U2I3">
    <property type="glycosylation" value="1 site, No reported glycans"/>
</dbReference>
<dbReference type="EnsemblFungi" id="BAE64232">
    <property type="protein sequence ID" value="BAE64232"/>
    <property type="gene ID" value="AO090038000444"/>
</dbReference>
<dbReference type="VEuPathDB" id="FungiDB:AO090038000444"/>
<dbReference type="OMA" id="YFQLHDK"/>
<dbReference type="Proteomes" id="UP000006564">
    <property type="component" value="Chromosome 6"/>
</dbReference>
<dbReference type="GO" id="GO:0005576">
    <property type="term" value="C:extracellular region"/>
    <property type="evidence" value="ECO:0007669"/>
    <property type="project" value="UniProtKB-SubCell"/>
</dbReference>
<dbReference type="GO" id="GO:0030248">
    <property type="term" value="F:cellulose binding"/>
    <property type="evidence" value="ECO:0007669"/>
    <property type="project" value="InterPro"/>
</dbReference>
<dbReference type="GO" id="GO:0016985">
    <property type="term" value="F:mannan endo-1,4-beta-mannosidase activity"/>
    <property type="evidence" value="ECO:0007669"/>
    <property type="project" value="UniProtKB-EC"/>
</dbReference>
<dbReference type="GO" id="GO:0046355">
    <property type="term" value="P:mannan catabolic process"/>
    <property type="evidence" value="ECO:0007669"/>
    <property type="project" value="UniProtKB-ARBA"/>
</dbReference>
<dbReference type="FunFam" id="3.20.20.80:FF:000076">
    <property type="entry name" value="Mannan endo-1,4-beta-mannosidase A"/>
    <property type="match status" value="1"/>
</dbReference>
<dbReference type="Gene3D" id="3.20.20.80">
    <property type="entry name" value="Glycosidases"/>
    <property type="match status" value="1"/>
</dbReference>
<dbReference type="InterPro" id="IPR035971">
    <property type="entry name" value="CBD_sf"/>
</dbReference>
<dbReference type="InterPro" id="IPR000254">
    <property type="entry name" value="Cellulose-bd_dom_fun"/>
</dbReference>
<dbReference type="InterPro" id="IPR001547">
    <property type="entry name" value="Glyco_hydro_5"/>
</dbReference>
<dbReference type="InterPro" id="IPR017853">
    <property type="entry name" value="Glycoside_hydrolase_SF"/>
</dbReference>
<dbReference type="InterPro" id="IPR045053">
    <property type="entry name" value="MAN-like"/>
</dbReference>
<dbReference type="PANTHER" id="PTHR31451">
    <property type="match status" value="1"/>
</dbReference>
<dbReference type="PANTHER" id="PTHR31451:SF57">
    <property type="entry name" value="BETA-1,4-ENDOGLUCANASE (EUROFUNG)-RELATED"/>
    <property type="match status" value="1"/>
</dbReference>
<dbReference type="Pfam" id="PF00734">
    <property type="entry name" value="CBM_1"/>
    <property type="match status" value="1"/>
</dbReference>
<dbReference type="Pfam" id="PF00150">
    <property type="entry name" value="Cellulase"/>
    <property type="match status" value="1"/>
</dbReference>
<dbReference type="SMART" id="SM00236">
    <property type="entry name" value="fCBD"/>
    <property type="match status" value="1"/>
</dbReference>
<dbReference type="SUPFAM" id="SSF51445">
    <property type="entry name" value="(Trans)glycosidases"/>
    <property type="match status" value="1"/>
</dbReference>
<dbReference type="SUPFAM" id="SSF57180">
    <property type="entry name" value="Cellulose-binding domain"/>
    <property type="match status" value="1"/>
</dbReference>
<dbReference type="PROSITE" id="PS00562">
    <property type="entry name" value="CBM1_1"/>
    <property type="match status" value="1"/>
</dbReference>
<dbReference type="PROSITE" id="PS51164">
    <property type="entry name" value="CBM1_2"/>
    <property type="match status" value="1"/>
</dbReference>
<keyword id="KW-0119">Carbohydrate metabolism</keyword>
<keyword id="KW-0325">Glycoprotein</keyword>
<keyword id="KW-0326">Glycosidase</keyword>
<keyword id="KW-0378">Hydrolase</keyword>
<keyword id="KW-1185">Reference proteome</keyword>
<keyword id="KW-0964">Secreted</keyword>
<keyword id="KW-0732">Signal</keyword>
<accession>Q2U2I3</accession>
<comment type="function">
    <text evidence="1">Endo-1,4-mannanase, a crucial enzyme for depolymerization of seed galactomannans and wood galactoglucomannans.</text>
</comment>
<comment type="catalytic activity">
    <reaction>
        <text>Random hydrolysis of (1-&gt;4)-beta-D-mannosidic linkages in mannans, galactomannans and glucomannans.</text>
        <dbReference type="EC" id="3.2.1.78"/>
    </reaction>
</comment>
<comment type="subcellular location">
    <subcellularLocation>
        <location evidence="1">Secreted</location>
    </subcellularLocation>
</comment>
<comment type="domain">
    <text>Has a modular structure: a carbohydrate-binding module (CBM) at the N-terminus, a linker rich in serines, and a C-terminal endo-1,4-mannanase catalytic module. The genes for catalytic modules and CBMs seem to have evolved separately and have been linked by gene fusion.</text>
</comment>
<comment type="similarity">
    <text evidence="7">Belongs to the glycosyl hydrolase 5 (cellulase A) family.</text>
</comment>
<comment type="sequence caution" evidence="7">
    <conflict type="erroneous gene model prediction">
        <sequence resource="EMBL-CDS" id="BAE64232"/>
    </conflict>
</comment>
<organism>
    <name type="scientific">Aspergillus oryzae (strain ATCC 42149 / RIB 40)</name>
    <name type="common">Yellow koji mold</name>
    <dbReference type="NCBI Taxonomy" id="510516"/>
    <lineage>
        <taxon>Eukaryota</taxon>
        <taxon>Fungi</taxon>
        <taxon>Dikarya</taxon>
        <taxon>Ascomycota</taxon>
        <taxon>Pezizomycotina</taxon>
        <taxon>Eurotiomycetes</taxon>
        <taxon>Eurotiomycetidae</taxon>
        <taxon>Eurotiales</taxon>
        <taxon>Aspergillaceae</taxon>
        <taxon>Aspergillus</taxon>
        <taxon>Aspergillus subgen. Circumdati</taxon>
    </lineage>
</organism>
<evidence type="ECO:0000250" key="1"/>
<evidence type="ECO:0000250" key="2">
    <source>
        <dbReference type="UniProtKB" id="B4XC07"/>
    </source>
</evidence>
<evidence type="ECO:0000250" key="3">
    <source>
        <dbReference type="UniProtKB" id="Q99036"/>
    </source>
</evidence>
<evidence type="ECO:0000255" key="4"/>
<evidence type="ECO:0000255" key="5">
    <source>
        <dbReference type="PROSITE-ProRule" id="PRU00597"/>
    </source>
</evidence>
<evidence type="ECO:0000256" key="6">
    <source>
        <dbReference type="SAM" id="MobiDB-lite"/>
    </source>
</evidence>
<evidence type="ECO:0000305" key="7"/>
<reference key="1">
    <citation type="journal article" date="2005" name="Nature">
        <title>Genome sequencing and analysis of Aspergillus oryzae.</title>
        <authorList>
            <person name="Machida M."/>
            <person name="Asai K."/>
            <person name="Sano M."/>
            <person name="Tanaka T."/>
            <person name="Kumagai T."/>
            <person name="Terai G."/>
            <person name="Kusumoto K."/>
            <person name="Arima T."/>
            <person name="Akita O."/>
            <person name="Kashiwagi Y."/>
            <person name="Abe K."/>
            <person name="Gomi K."/>
            <person name="Horiuchi H."/>
            <person name="Kitamoto K."/>
            <person name="Kobayashi T."/>
            <person name="Takeuchi M."/>
            <person name="Denning D.W."/>
            <person name="Galagan J.E."/>
            <person name="Nierman W.C."/>
            <person name="Yu J."/>
            <person name="Archer D.B."/>
            <person name="Bennett J.W."/>
            <person name="Bhatnagar D."/>
            <person name="Cleveland T.E."/>
            <person name="Fedorova N.D."/>
            <person name="Gotoh O."/>
            <person name="Horikawa H."/>
            <person name="Hosoyama A."/>
            <person name="Ichinomiya M."/>
            <person name="Igarashi R."/>
            <person name="Iwashita K."/>
            <person name="Juvvadi P.R."/>
            <person name="Kato M."/>
            <person name="Kato Y."/>
            <person name="Kin T."/>
            <person name="Kokubun A."/>
            <person name="Maeda H."/>
            <person name="Maeyama N."/>
            <person name="Maruyama J."/>
            <person name="Nagasaki H."/>
            <person name="Nakajima T."/>
            <person name="Oda K."/>
            <person name="Okada K."/>
            <person name="Paulsen I."/>
            <person name="Sakamoto K."/>
            <person name="Sawano T."/>
            <person name="Takahashi M."/>
            <person name="Takase K."/>
            <person name="Terabayashi Y."/>
            <person name="Wortman J.R."/>
            <person name="Yamada O."/>
            <person name="Yamagata Y."/>
            <person name="Anazawa H."/>
            <person name="Hata Y."/>
            <person name="Koide Y."/>
            <person name="Komori T."/>
            <person name="Koyama Y."/>
            <person name="Minetoki T."/>
            <person name="Suharnan S."/>
            <person name="Tanaka A."/>
            <person name="Isono K."/>
            <person name="Kuhara S."/>
            <person name="Ogasawara N."/>
            <person name="Kikuchi H."/>
        </authorList>
    </citation>
    <scope>NUCLEOTIDE SEQUENCE [LARGE SCALE GENOMIC DNA]</scope>
    <source>
        <strain>ATCC 42149 / RIB 40</strain>
    </source>
</reference>
<sequence length="463" mass="49992">MRSLSSIALLSVVGAASAQAGPWAQCGGKSFSGSSECASGWKCQELNEWFSQCVPGAESTTPTVSSTPTPTDAPSVSITASVTTGINKSISVSSASKSTPLPSSSSASPSPRPTGSGSFAKADGLQFSIDGETKYFAGTNAYWLPFQMNDADIDSVFDHLEQAGLKILRVWGFNDVNTAPSPGTVYFQLHDKEKGTSTINTGKDGLQRLDYVVAAAEKHGVKLIIPFVNSWDDYGGYNAYVKAYGGSKTEWFTNEKIQSVYQAYIKAVVSRYRDSPAIFAWELGNEPRCSGCSTDVIHGWATKISAYIKSLDPNHMVALGDEGMGLTIGSDQSYPYGTSEGNDFEKNLAIPDIDFGTLHLYTTDWGIKDNAWGNGWVENHAKACKAAGKPCLFEEYGMKGNHCTDELKWQKTSLSSGTAADLIWQYGQQLSTGESPKDAYSIFYGTDEWKCAVMDHMENVNKN</sequence>
<protein>
    <recommendedName>
        <fullName>Probable mannan endo-1,4-beta-mannosidase F</fullName>
        <ecNumber>3.2.1.78</ecNumber>
    </recommendedName>
    <alternativeName>
        <fullName>Endo-beta-1,4-mannanase F</fullName>
    </alternativeName>
</protein>
<feature type="signal peptide" evidence="4">
    <location>
        <begin position="1"/>
        <end position="18"/>
    </location>
</feature>
<feature type="chain" id="PRO_0000393716" description="Probable mannan endo-1,4-beta-mannosidase F">
    <location>
        <begin position="19"/>
        <end position="463"/>
    </location>
</feature>
<feature type="domain" description="CBM1" evidence="5">
    <location>
        <begin position="19"/>
        <end position="54"/>
    </location>
</feature>
<feature type="region of interest" description="Disordered" evidence="6">
    <location>
        <begin position="57"/>
        <end position="78"/>
    </location>
</feature>
<feature type="region of interest" description="Ser-rich linker">
    <location>
        <begin position="75"/>
        <end position="118"/>
    </location>
</feature>
<feature type="region of interest" description="Disordered" evidence="6">
    <location>
        <begin position="93"/>
        <end position="121"/>
    </location>
</feature>
<feature type="region of interest" description="Catalytic">
    <location>
        <begin position="119"/>
        <end position="463"/>
    </location>
</feature>
<feature type="compositionally biased region" description="Low complexity" evidence="6">
    <location>
        <begin position="59"/>
        <end position="77"/>
    </location>
</feature>
<feature type="compositionally biased region" description="Low complexity" evidence="6">
    <location>
        <begin position="93"/>
        <end position="118"/>
    </location>
</feature>
<feature type="active site" description="Proton donor/acceptor" evidence="3">
    <location>
        <position position="286"/>
    </location>
</feature>
<feature type="active site" description="Nucleophile" evidence="3">
    <location>
        <position position="395"/>
    </location>
</feature>
<feature type="binding site" evidence="2">
    <location>
        <position position="171"/>
    </location>
    <ligand>
        <name>substrate</name>
    </ligand>
</feature>
<feature type="binding site" evidence="2">
    <location>
        <position position="285"/>
    </location>
    <ligand>
        <name>substrate</name>
    </ligand>
</feature>
<feature type="binding site" evidence="2">
    <location>
        <position position="361"/>
    </location>
    <ligand>
        <name>substrate</name>
    </ligand>
</feature>
<feature type="binding site" evidence="2">
    <location>
        <position position="424"/>
    </location>
    <ligand>
        <name>substrate</name>
    </ligand>
</feature>
<feature type="glycosylation site" description="N-linked (GlcNAc...) asparagine" evidence="4">
    <location>
        <position position="87"/>
    </location>
</feature>
<proteinExistence type="inferred from homology"/>
<name>MANF_ASPOR</name>